<keyword id="KW-0963">Cytoplasm</keyword>
<keyword id="KW-0489">Methyltransferase</keyword>
<keyword id="KW-1185">Reference proteome</keyword>
<keyword id="KW-0698">rRNA processing</keyword>
<keyword id="KW-0949">S-adenosyl-L-methionine</keyword>
<keyword id="KW-0808">Transferase</keyword>
<organism>
    <name type="scientific">Zymomonas mobilis subsp. mobilis (strain ATCC 31821 / ZM4 / CP4)</name>
    <dbReference type="NCBI Taxonomy" id="264203"/>
    <lineage>
        <taxon>Bacteria</taxon>
        <taxon>Pseudomonadati</taxon>
        <taxon>Pseudomonadota</taxon>
        <taxon>Alphaproteobacteria</taxon>
        <taxon>Sphingomonadales</taxon>
        <taxon>Zymomonadaceae</taxon>
        <taxon>Zymomonas</taxon>
    </lineage>
</organism>
<protein>
    <recommendedName>
        <fullName evidence="1">Ribosomal RNA small subunit methyltransferase G</fullName>
        <ecNumber evidence="1">2.1.1.170</ecNumber>
    </recommendedName>
    <alternativeName>
        <fullName evidence="1">16S rRNA 7-methylguanosine methyltransferase</fullName>
        <shortName evidence="1">16S rRNA m7G methyltransferase</shortName>
    </alternativeName>
</protein>
<evidence type="ECO:0000255" key="1">
    <source>
        <dbReference type="HAMAP-Rule" id="MF_00074"/>
    </source>
</evidence>
<gene>
    <name evidence="1" type="primary">rsmG</name>
    <name type="ordered locus">ZMO1980</name>
</gene>
<name>RSMG_ZYMMO</name>
<feature type="chain" id="PRO_0000184375" description="Ribosomal RNA small subunit methyltransferase G">
    <location>
        <begin position="1"/>
        <end position="221"/>
    </location>
</feature>
<feature type="binding site" evidence="1">
    <location>
        <position position="83"/>
    </location>
    <ligand>
        <name>S-adenosyl-L-methionine</name>
        <dbReference type="ChEBI" id="CHEBI:59789"/>
    </ligand>
</feature>
<feature type="binding site" evidence="1">
    <location>
        <position position="88"/>
    </location>
    <ligand>
        <name>S-adenosyl-L-methionine</name>
        <dbReference type="ChEBI" id="CHEBI:59789"/>
    </ligand>
</feature>
<feature type="binding site" evidence="1">
    <location>
        <begin position="132"/>
        <end position="133"/>
    </location>
    <ligand>
        <name>S-adenosyl-L-methionine</name>
        <dbReference type="ChEBI" id="CHEBI:59789"/>
    </ligand>
</feature>
<feature type="binding site" evidence="1">
    <location>
        <position position="146"/>
    </location>
    <ligand>
        <name>S-adenosyl-L-methionine</name>
        <dbReference type="ChEBI" id="CHEBI:59789"/>
    </ligand>
</feature>
<comment type="function">
    <text evidence="1">Specifically methylates the N7 position of guanine in position 527 of 16S rRNA.</text>
</comment>
<comment type="catalytic activity">
    <reaction evidence="1">
        <text>guanosine(527) in 16S rRNA + S-adenosyl-L-methionine = N(7)-methylguanosine(527) in 16S rRNA + S-adenosyl-L-homocysteine</text>
        <dbReference type="Rhea" id="RHEA:42732"/>
        <dbReference type="Rhea" id="RHEA-COMP:10209"/>
        <dbReference type="Rhea" id="RHEA-COMP:10210"/>
        <dbReference type="ChEBI" id="CHEBI:57856"/>
        <dbReference type="ChEBI" id="CHEBI:59789"/>
        <dbReference type="ChEBI" id="CHEBI:74269"/>
        <dbReference type="ChEBI" id="CHEBI:74480"/>
        <dbReference type="EC" id="2.1.1.170"/>
    </reaction>
</comment>
<comment type="subcellular location">
    <subcellularLocation>
        <location evidence="1">Cytoplasm</location>
    </subcellularLocation>
</comment>
<comment type="similarity">
    <text evidence="1">Belongs to the methyltransferase superfamily. RNA methyltransferase RsmG family.</text>
</comment>
<dbReference type="EC" id="2.1.1.170" evidence="1"/>
<dbReference type="EMBL" id="AE008692">
    <property type="protein sequence ID" value="AAV90604.1"/>
    <property type="molecule type" value="Genomic_DNA"/>
</dbReference>
<dbReference type="RefSeq" id="WP_011241702.1">
    <property type="nucleotide sequence ID" value="NZ_CP035711.1"/>
</dbReference>
<dbReference type="SMR" id="Q5NL06"/>
<dbReference type="STRING" id="264203.ZMO1980"/>
<dbReference type="KEGG" id="zmo:ZMO1980"/>
<dbReference type="eggNOG" id="COG0357">
    <property type="taxonomic scope" value="Bacteria"/>
</dbReference>
<dbReference type="HOGENOM" id="CLU_065341_1_1_5"/>
<dbReference type="Proteomes" id="UP000001173">
    <property type="component" value="Chromosome"/>
</dbReference>
<dbReference type="GO" id="GO:0005829">
    <property type="term" value="C:cytosol"/>
    <property type="evidence" value="ECO:0007669"/>
    <property type="project" value="TreeGrafter"/>
</dbReference>
<dbReference type="GO" id="GO:0070043">
    <property type="term" value="F:rRNA (guanine-N7-)-methyltransferase activity"/>
    <property type="evidence" value="ECO:0007669"/>
    <property type="project" value="UniProtKB-UniRule"/>
</dbReference>
<dbReference type="CDD" id="cd02440">
    <property type="entry name" value="AdoMet_MTases"/>
    <property type="match status" value="1"/>
</dbReference>
<dbReference type="Gene3D" id="3.40.50.150">
    <property type="entry name" value="Vaccinia Virus protein VP39"/>
    <property type="match status" value="1"/>
</dbReference>
<dbReference type="HAMAP" id="MF_00074">
    <property type="entry name" value="16SrRNA_methyltr_G"/>
    <property type="match status" value="1"/>
</dbReference>
<dbReference type="InterPro" id="IPR003682">
    <property type="entry name" value="rRNA_ssu_MeTfrase_G"/>
</dbReference>
<dbReference type="InterPro" id="IPR029063">
    <property type="entry name" value="SAM-dependent_MTases_sf"/>
</dbReference>
<dbReference type="NCBIfam" id="TIGR00138">
    <property type="entry name" value="rsmG_gidB"/>
    <property type="match status" value="1"/>
</dbReference>
<dbReference type="PANTHER" id="PTHR31760">
    <property type="entry name" value="S-ADENOSYL-L-METHIONINE-DEPENDENT METHYLTRANSFERASES SUPERFAMILY PROTEIN"/>
    <property type="match status" value="1"/>
</dbReference>
<dbReference type="PANTHER" id="PTHR31760:SF0">
    <property type="entry name" value="S-ADENOSYL-L-METHIONINE-DEPENDENT METHYLTRANSFERASES SUPERFAMILY PROTEIN"/>
    <property type="match status" value="1"/>
</dbReference>
<dbReference type="Pfam" id="PF02527">
    <property type="entry name" value="GidB"/>
    <property type="match status" value="1"/>
</dbReference>
<dbReference type="SUPFAM" id="SSF53335">
    <property type="entry name" value="S-adenosyl-L-methionine-dependent methyltransferases"/>
    <property type="match status" value="1"/>
</dbReference>
<accession>Q5NL06</accession>
<proteinExistence type="inferred from homology"/>
<reference key="1">
    <citation type="journal article" date="2005" name="Nat. Biotechnol.">
        <title>The genome sequence of the ethanologenic bacterium Zymomonas mobilis ZM4.</title>
        <authorList>
            <person name="Seo J.-S."/>
            <person name="Chong H."/>
            <person name="Park H.S."/>
            <person name="Yoon K.-O."/>
            <person name="Jung C."/>
            <person name="Kim J.J."/>
            <person name="Hong J.H."/>
            <person name="Kim H."/>
            <person name="Kim J.-H."/>
            <person name="Kil J.-I."/>
            <person name="Park C.J."/>
            <person name="Oh H.-M."/>
            <person name="Lee J.-S."/>
            <person name="Jin S.-J."/>
            <person name="Um H.-W."/>
            <person name="Lee H.-J."/>
            <person name="Oh S.-J."/>
            <person name="Kim J.Y."/>
            <person name="Kang H.L."/>
            <person name="Lee S.Y."/>
            <person name="Lee K.J."/>
            <person name="Kang H.S."/>
        </authorList>
    </citation>
    <scope>NUCLEOTIDE SEQUENCE [LARGE SCALE GENOMIC DNA]</scope>
    <source>
        <strain>ATCC 31821 / ZM4 / CP4</strain>
    </source>
</reference>
<sequence>MTREEALLWLDQHIGISRETVEKLDAFVACLHAEMAHQNLIARSTVDDLWGRHIIDSAQLLPLARKEAAFNKKASPKSWLDLGSGAGFPGIIIAILSEMAVTLVESRRKRVEFLEKAAEAAGTPVTILGQRLENIEPQAFDIITARAFAPLDKLWRLAFPFSHNESLWLLPKGQNARTELEETRKLWQGDTRIEGSVTDPQSAIIVATHIHPKKQKTGKKT</sequence>